<comment type="catalytic activity">
    <reaction evidence="1">
        <text>(2R)-O-phospho-3-sulfolactate + H2O = (2R)-3-sulfolactate + phosphate</text>
        <dbReference type="Rhea" id="RHEA:23416"/>
        <dbReference type="ChEBI" id="CHEBI:15377"/>
        <dbReference type="ChEBI" id="CHEBI:15597"/>
        <dbReference type="ChEBI" id="CHEBI:43474"/>
        <dbReference type="ChEBI" id="CHEBI:58738"/>
        <dbReference type="EC" id="3.1.3.71"/>
    </reaction>
</comment>
<comment type="cofactor">
    <cofactor evidence="1">
        <name>Mg(2+)</name>
        <dbReference type="ChEBI" id="CHEBI:18420"/>
    </cofactor>
</comment>
<comment type="similarity">
    <text evidence="1">Belongs to the ComB family.</text>
</comment>
<gene>
    <name evidence="1" type="primary">comB</name>
    <name type="ordered locus">CLH_0068</name>
</gene>
<accession>B2UX99</accession>
<protein>
    <recommendedName>
        <fullName evidence="1">Probable 2-phosphosulfolactate phosphatase</fullName>
        <ecNumber evidence="1">3.1.3.71</ecNumber>
    </recommendedName>
</protein>
<keyword id="KW-0378">Hydrolase</keyword>
<keyword id="KW-0460">Magnesium</keyword>
<proteinExistence type="inferred from homology"/>
<name>COMB_CLOBA</name>
<dbReference type="EC" id="3.1.3.71" evidence="1"/>
<dbReference type="EMBL" id="CP001078">
    <property type="protein sequence ID" value="ACD51592.1"/>
    <property type="molecule type" value="Genomic_DNA"/>
</dbReference>
<dbReference type="RefSeq" id="WP_012449921.1">
    <property type="nucleotide sequence ID" value="NC_010723.1"/>
</dbReference>
<dbReference type="SMR" id="B2UX99"/>
<dbReference type="KEGG" id="cbt:CLH_0068"/>
<dbReference type="HOGENOM" id="CLU_070028_0_0_9"/>
<dbReference type="GO" id="GO:0050532">
    <property type="term" value="F:2-phosphosulfolactate phosphatase activity"/>
    <property type="evidence" value="ECO:0007669"/>
    <property type="project" value="UniProtKB-UniRule"/>
</dbReference>
<dbReference type="GO" id="GO:0000287">
    <property type="term" value="F:magnesium ion binding"/>
    <property type="evidence" value="ECO:0007669"/>
    <property type="project" value="UniProtKB-UniRule"/>
</dbReference>
<dbReference type="GO" id="GO:0050545">
    <property type="term" value="F:sulfopyruvate decarboxylase activity"/>
    <property type="evidence" value="ECO:0007669"/>
    <property type="project" value="TreeGrafter"/>
</dbReference>
<dbReference type="FunFam" id="3.90.1560.10:FF:000001">
    <property type="entry name" value="Probable 2-phosphosulfolactate phosphatase"/>
    <property type="match status" value="1"/>
</dbReference>
<dbReference type="Gene3D" id="3.90.1560.10">
    <property type="entry name" value="ComB-like"/>
    <property type="match status" value="1"/>
</dbReference>
<dbReference type="HAMAP" id="MF_00490">
    <property type="entry name" value="ComB"/>
    <property type="match status" value="1"/>
</dbReference>
<dbReference type="InterPro" id="IPR005238">
    <property type="entry name" value="ComB-like"/>
</dbReference>
<dbReference type="InterPro" id="IPR036702">
    <property type="entry name" value="ComB-like_sf"/>
</dbReference>
<dbReference type="NCBIfam" id="NF002055">
    <property type="entry name" value="PRK00886.1-4"/>
    <property type="match status" value="1"/>
</dbReference>
<dbReference type="PANTHER" id="PTHR37311">
    <property type="entry name" value="2-PHOSPHOSULFOLACTATE PHOSPHATASE-RELATED"/>
    <property type="match status" value="1"/>
</dbReference>
<dbReference type="PANTHER" id="PTHR37311:SF1">
    <property type="entry name" value="2-PHOSPHOSULFOLACTATE PHOSPHATASE-RELATED"/>
    <property type="match status" value="1"/>
</dbReference>
<dbReference type="Pfam" id="PF04029">
    <property type="entry name" value="2-ph_phosp"/>
    <property type="match status" value="1"/>
</dbReference>
<dbReference type="SUPFAM" id="SSF142823">
    <property type="entry name" value="ComB-like"/>
    <property type="match status" value="1"/>
</dbReference>
<reference key="1">
    <citation type="submission" date="2008-05" db="EMBL/GenBank/DDBJ databases">
        <title>Complete genome sequence of Clostridium botulinum E3 str. Alaska E43.</title>
        <authorList>
            <person name="Brinkac L.M."/>
            <person name="Brown J.L."/>
            <person name="Bruce D."/>
            <person name="Detter C."/>
            <person name="Munk C."/>
            <person name="Smith L.A."/>
            <person name="Smith T.J."/>
            <person name="Sutton G."/>
            <person name="Brettin T.S."/>
        </authorList>
    </citation>
    <scope>NUCLEOTIDE SEQUENCE [LARGE SCALE GENOMIC DNA]</scope>
    <source>
        <strain>Alaska E43 / Type E3</strain>
    </source>
</reference>
<evidence type="ECO:0000255" key="1">
    <source>
        <dbReference type="HAMAP-Rule" id="MF_00490"/>
    </source>
</evidence>
<sequence length="238" mass="26654">MKVDVIISADYITDDIVKDKVVVVIDMFRATSVITTAINNGCQKVIPYLTVEETLEEAKKYDKSEVILGGERRAVKIEGFDLSNSPLEYTEKVVKNKTVLMTTTNGTRALTKCLPGKKIIIAAMINAEAVAKKLLEFNDDIVIVNAGTNGEFSMDDYICGGYIINTMLKEKSNIELTDISKTSNMIYESNKDIINYVKEARHYSVMRSLKLDNDIKYCIKKSIVDVVPIYDGDKIIKL</sequence>
<feature type="chain" id="PRO_1000126222" description="Probable 2-phosphosulfolactate phosphatase">
    <location>
        <begin position="1"/>
        <end position="238"/>
    </location>
</feature>
<organism>
    <name type="scientific">Clostridium botulinum (strain Alaska E43 / Type E3)</name>
    <dbReference type="NCBI Taxonomy" id="508767"/>
    <lineage>
        <taxon>Bacteria</taxon>
        <taxon>Bacillati</taxon>
        <taxon>Bacillota</taxon>
        <taxon>Clostridia</taxon>
        <taxon>Eubacteriales</taxon>
        <taxon>Clostridiaceae</taxon>
        <taxon>Clostridium</taxon>
    </lineage>
</organism>